<dbReference type="EC" id="4.3.2.10" evidence="1"/>
<dbReference type="EC" id="3.5.1.2" evidence="1"/>
<dbReference type="EMBL" id="AE017283">
    <property type="protein sequence ID" value="AAT82904.1"/>
    <property type="status" value="ALT_INIT"/>
    <property type="molecule type" value="Genomic_DNA"/>
</dbReference>
<dbReference type="RefSeq" id="WP_002513558.1">
    <property type="nucleotide sequence ID" value="NZ_CP025935.1"/>
</dbReference>
<dbReference type="SMR" id="Q6A8L2"/>
<dbReference type="EnsemblBacteria" id="AAT82904">
    <property type="protein sequence ID" value="AAT82904"/>
    <property type="gene ID" value="PPA1155"/>
</dbReference>
<dbReference type="KEGG" id="pac:PPA1155"/>
<dbReference type="eggNOG" id="COG0118">
    <property type="taxonomic scope" value="Bacteria"/>
</dbReference>
<dbReference type="HOGENOM" id="CLU_071837_1_0_11"/>
<dbReference type="UniPathway" id="UPA00031">
    <property type="reaction ID" value="UER00010"/>
</dbReference>
<dbReference type="Proteomes" id="UP000000603">
    <property type="component" value="Chromosome"/>
</dbReference>
<dbReference type="GO" id="GO:0005737">
    <property type="term" value="C:cytoplasm"/>
    <property type="evidence" value="ECO:0007669"/>
    <property type="project" value="UniProtKB-SubCell"/>
</dbReference>
<dbReference type="GO" id="GO:0004359">
    <property type="term" value="F:glutaminase activity"/>
    <property type="evidence" value="ECO:0007669"/>
    <property type="project" value="UniProtKB-EC"/>
</dbReference>
<dbReference type="GO" id="GO:0000107">
    <property type="term" value="F:imidazoleglycerol-phosphate synthase activity"/>
    <property type="evidence" value="ECO:0007669"/>
    <property type="project" value="UniProtKB-UniRule"/>
</dbReference>
<dbReference type="GO" id="GO:0016829">
    <property type="term" value="F:lyase activity"/>
    <property type="evidence" value="ECO:0007669"/>
    <property type="project" value="UniProtKB-KW"/>
</dbReference>
<dbReference type="GO" id="GO:0000105">
    <property type="term" value="P:L-histidine biosynthetic process"/>
    <property type="evidence" value="ECO:0007669"/>
    <property type="project" value="UniProtKB-UniRule"/>
</dbReference>
<dbReference type="CDD" id="cd01748">
    <property type="entry name" value="GATase1_IGP_Synthase"/>
    <property type="match status" value="1"/>
</dbReference>
<dbReference type="Gene3D" id="3.40.50.880">
    <property type="match status" value="1"/>
</dbReference>
<dbReference type="HAMAP" id="MF_00278">
    <property type="entry name" value="HisH"/>
    <property type="match status" value="1"/>
</dbReference>
<dbReference type="InterPro" id="IPR029062">
    <property type="entry name" value="Class_I_gatase-like"/>
</dbReference>
<dbReference type="InterPro" id="IPR017926">
    <property type="entry name" value="GATASE"/>
</dbReference>
<dbReference type="InterPro" id="IPR010139">
    <property type="entry name" value="Imidazole-glycPsynth_HisH"/>
</dbReference>
<dbReference type="NCBIfam" id="TIGR01855">
    <property type="entry name" value="IMP_synth_hisH"/>
    <property type="match status" value="1"/>
</dbReference>
<dbReference type="PANTHER" id="PTHR42701">
    <property type="entry name" value="IMIDAZOLE GLYCEROL PHOSPHATE SYNTHASE SUBUNIT HISH"/>
    <property type="match status" value="1"/>
</dbReference>
<dbReference type="PANTHER" id="PTHR42701:SF1">
    <property type="entry name" value="IMIDAZOLE GLYCEROL PHOSPHATE SYNTHASE SUBUNIT HISH"/>
    <property type="match status" value="1"/>
</dbReference>
<dbReference type="Pfam" id="PF00117">
    <property type="entry name" value="GATase"/>
    <property type="match status" value="1"/>
</dbReference>
<dbReference type="PIRSF" id="PIRSF000495">
    <property type="entry name" value="Amidotransf_hisH"/>
    <property type="match status" value="1"/>
</dbReference>
<dbReference type="SUPFAM" id="SSF52317">
    <property type="entry name" value="Class I glutamine amidotransferase-like"/>
    <property type="match status" value="1"/>
</dbReference>
<dbReference type="PROSITE" id="PS51273">
    <property type="entry name" value="GATASE_TYPE_1"/>
    <property type="match status" value="1"/>
</dbReference>
<reference key="1">
    <citation type="journal article" date="2004" name="Science">
        <title>The complete genome sequence of Propionibacterium acnes, a commensal of human skin.</title>
        <authorList>
            <person name="Brueggemann H."/>
            <person name="Henne A."/>
            <person name="Hoster F."/>
            <person name="Liesegang H."/>
            <person name="Wiezer A."/>
            <person name="Strittmatter A."/>
            <person name="Hujer S."/>
            <person name="Duerre P."/>
            <person name="Gottschalk G."/>
        </authorList>
    </citation>
    <scope>NUCLEOTIDE SEQUENCE [LARGE SCALE GENOMIC DNA]</scope>
    <source>
        <strain>DSM 16379 / KPA171202</strain>
    </source>
</reference>
<sequence>MSDPVRVGIIDHGSGNLHSARRALRQVGAEVIVSNDPSALLDTDALVLPGVGALAVCMTGLRAMGGARLVRQWVDEGRPLLGICVGHQMLFERGRERDVDVKCLGVLPGVVEELPAERLPHMGWNTVTPATDSALFQGVQERFYFVHSYGVVVTGPHDHFTTATHQGATFVAAAEYGPVTSTQFHPEKSGIAGLALLTRWLNQLS</sequence>
<feature type="chain" id="PRO_0000231747" description="Imidazole glycerol phosphate synthase subunit HisH">
    <location>
        <begin position="1"/>
        <end position="205"/>
    </location>
</feature>
<feature type="domain" description="Glutamine amidotransferase type-1" evidence="1">
    <location>
        <begin position="6"/>
        <end position="205"/>
    </location>
</feature>
<feature type="active site" description="Nucleophile" evidence="1">
    <location>
        <position position="84"/>
    </location>
</feature>
<feature type="active site" evidence="1">
    <location>
        <position position="185"/>
    </location>
</feature>
<feature type="active site" evidence="1">
    <location>
        <position position="187"/>
    </location>
</feature>
<keyword id="KW-0028">Amino-acid biosynthesis</keyword>
<keyword id="KW-0963">Cytoplasm</keyword>
<keyword id="KW-0315">Glutamine amidotransferase</keyword>
<keyword id="KW-0368">Histidine biosynthesis</keyword>
<keyword id="KW-0378">Hydrolase</keyword>
<keyword id="KW-0456">Lyase</keyword>
<accession>Q6A8L2</accession>
<comment type="function">
    <text evidence="1">IGPS catalyzes the conversion of PRFAR and glutamine to IGP, AICAR and glutamate. The HisH subunit catalyzes the hydrolysis of glutamine to glutamate and ammonia as part of the synthesis of IGP and AICAR. The resulting ammonia molecule is channeled to the active site of HisF.</text>
</comment>
<comment type="catalytic activity">
    <reaction evidence="1">
        <text>5-[(5-phospho-1-deoxy-D-ribulos-1-ylimino)methylamino]-1-(5-phospho-beta-D-ribosyl)imidazole-4-carboxamide + L-glutamine = D-erythro-1-(imidazol-4-yl)glycerol 3-phosphate + 5-amino-1-(5-phospho-beta-D-ribosyl)imidazole-4-carboxamide + L-glutamate + H(+)</text>
        <dbReference type="Rhea" id="RHEA:24793"/>
        <dbReference type="ChEBI" id="CHEBI:15378"/>
        <dbReference type="ChEBI" id="CHEBI:29985"/>
        <dbReference type="ChEBI" id="CHEBI:58278"/>
        <dbReference type="ChEBI" id="CHEBI:58359"/>
        <dbReference type="ChEBI" id="CHEBI:58475"/>
        <dbReference type="ChEBI" id="CHEBI:58525"/>
        <dbReference type="EC" id="4.3.2.10"/>
    </reaction>
</comment>
<comment type="catalytic activity">
    <reaction evidence="1">
        <text>L-glutamine + H2O = L-glutamate + NH4(+)</text>
        <dbReference type="Rhea" id="RHEA:15889"/>
        <dbReference type="ChEBI" id="CHEBI:15377"/>
        <dbReference type="ChEBI" id="CHEBI:28938"/>
        <dbReference type="ChEBI" id="CHEBI:29985"/>
        <dbReference type="ChEBI" id="CHEBI:58359"/>
        <dbReference type="EC" id="3.5.1.2"/>
    </reaction>
</comment>
<comment type="pathway">
    <text evidence="1">Amino-acid biosynthesis; L-histidine biosynthesis; L-histidine from 5-phospho-alpha-D-ribose 1-diphosphate: step 5/9.</text>
</comment>
<comment type="subunit">
    <text evidence="1">Heterodimer of HisH and HisF.</text>
</comment>
<comment type="subcellular location">
    <subcellularLocation>
        <location evidence="1">Cytoplasm</location>
    </subcellularLocation>
</comment>
<comment type="sequence caution" evidence="2">
    <conflict type="erroneous initiation">
        <sequence resource="EMBL-CDS" id="AAT82904"/>
    </conflict>
</comment>
<name>HIS5_CUTAK</name>
<protein>
    <recommendedName>
        <fullName evidence="1">Imidazole glycerol phosphate synthase subunit HisH</fullName>
        <ecNumber evidence="1">4.3.2.10</ecNumber>
    </recommendedName>
    <alternativeName>
        <fullName evidence="1">IGP synthase glutaminase subunit</fullName>
        <ecNumber evidence="1">3.5.1.2</ecNumber>
    </alternativeName>
    <alternativeName>
        <fullName evidence="1">IGP synthase subunit HisH</fullName>
    </alternativeName>
    <alternativeName>
        <fullName evidence="1">ImGP synthase subunit HisH</fullName>
        <shortName evidence="1">IGPS subunit HisH</shortName>
    </alternativeName>
</protein>
<organism>
    <name type="scientific">Cutibacterium acnes (strain DSM 16379 / KPA171202)</name>
    <name type="common">Propionibacterium acnes</name>
    <dbReference type="NCBI Taxonomy" id="267747"/>
    <lineage>
        <taxon>Bacteria</taxon>
        <taxon>Bacillati</taxon>
        <taxon>Actinomycetota</taxon>
        <taxon>Actinomycetes</taxon>
        <taxon>Propionibacteriales</taxon>
        <taxon>Propionibacteriaceae</taxon>
        <taxon>Cutibacterium</taxon>
    </lineage>
</organism>
<gene>
    <name evidence="1" type="primary">hisH</name>
    <name type="ordered locus">PPA1155</name>
</gene>
<proteinExistence type="inferred from homology"/>
<evidence type="ECO:0000255" key="1">
    <source>
        <dbReference type="HAMAP-Rule" id="MF_00278"/>
    </source>
</evidence>
<evidence type="ECO:0000305" key="2"/>